<accession>C0ZPH6</accession>
<name>Y4964_RHOE4</name>
<proteinExistence type="inferred from homology"/>
<comment type="subcellular location">
    <subcellularLocation>
        <location evidence="1">Cell membrane</location>
        <topology evidence="1">Multi-pass membrane protein</topology>
    </subcellularLocation>
</comment>
<comment type="similarity">
    <text evidence="1">Belongs to the UPF0060 family.</text>
</comment>
<evidence type="ECO:0000255" key="1">
    <source>
        <dbReference type="HAMAP-Rule" id="MF_00010"/>
    </source>
</evidence>
<sequence>MTVARSLLLFVLAALLEIGGAWLVWQGIREHKGWIWVGLGVISLGLYGLVATMQPDANFGRILAAYGGIFVAGSLLWAVVMDGFRPDRFDIAGALICLVGVGVIMYAR</sequence>
<gene>
    <name type="ordered locus">RER_49640</name>
</gene>
<organism>
    <name type="scientific">Rhodococcus erythropolis (strain PR4 / NBRC 100887)</name>
    <dbReference type="NCBI Taxonomy" id="234621"/>
    <lineage>
        <taxon>Bacteria</taxon>
        <taxon>Bacillati</taxon>
        <taxon>Actinomycetota</taxon>
        <taxon>Actinomycetes</taxon>
        <taxon>Mycobacteriales</taxon>
        <taxon>Nocardiaceae</taxon>
        <taxon>Rhodococcus</taxon>
        <taxon>Rhodococcus erythropolis group</taxon>
    </lineage>
</organism>
<dbReference type="EMBL" id="AP008957">
    <property type="protein sequence ID" value="BAH35672.1"/>
    <property type="molecule type" value="Genomic_DNA"/>
</dbReference>
<dbReference type="RefSeq" id="WP_003940244.1">
    <property type="nucleotide sequence ID" value="NC_012490.1"/>
</dbReference>
<dbReference type="SMR" id="C0ZPH6"/>
<dbReference type="KEGG" id="rer:RER_49640"/>
<dbReference type="eggNOG" id="COG1742">
    <property type="taxonomic scope" value="Bacteria"/>
</dbReference>
<dbReference type="HOGENOM" id="CLU_117653_0_1_11"/>
<dbReference type="Proteomes" id="UP000002204">
    <property type="component" value="Chromosome"/>
</dbReference>
<dbReference type="GO" id="GO:0005886">
    <property type="term" value="C:plasma membrane"/>
    <property type="evidence" value="ECO:0007669"/>
    <property type="project" value="UniProtKB-SubCell"/>
</dbReference>
<dbReference type="HAMAP" id="MF_00010">
    <property type="entry name" value="UPF0060"/>
    <property type="match status" value="1"/>
</dbReference>
<dbReference type="InterPro" id="IPR003844">
    <property type="entry name" value="UPF0060"/>
</dbReference>
<dbReference type="NCBIfam" id="NF002586">
    <property type="entry name" value="PRK02237.1"/>
    <property type="match status" value="1"/>
</dbReference>
<dbReference type="PANTHER" id="PTHR36116">
    <property type="entry name" value="UPF0060 MEMBRANE PROTEIN YNFA"/>
    <property type="match status" value="1"/>
</dbReference>
<dbReference type="PANTHER" id="PTHR36116:SF1">
    <property type="entry name" value="UPF0060 MEMBRANE PROTEIN YNFA"/>
    <property type="match status" value="1"/>
</dbReference>
<dbReference type="Pfam" id="PF02694">
    <property type="entry name" value="UPF0060"/>
    <property type="match status" value="1"/>
</dbReference>
<dbReference type="SUPFAM" id="SSF103481">
    <property type="entry name" value="Multidrug resistance efflux transporter EmrE"/>
    <property type="match status" value="1"/>
</dbReference>
<protein>
    <recommendedName>
        <fullName evidence="1">UPF0060 membrane protein RER_49640</fullName>
    </recommendedName>
</protein>
<reference key="1">
    <citation type="submission" date="2005-03" db="EMBL/GenBank/DDBJ databases">
        <title>Comparison of the complete genome sequences of Rhodococcus erythropolis PR4 and Rhodococcus opacus B4.</title>
        <authorList>
            <person name="Takarada H."/>
            <person name="Sekine M."/>
            <person name="Hosoyama A."/>
            <person name="Yamada R."/>
            <person name="Fujisawa T."/>
            <person name="Omata S."/>
            <person name="Shimizu A."/>
            <person name="Tsukatani N."/>
            <person name="Tanikawa S."/>
            <person name="Fujita N."/>
            <person name="Harayama S."/>
        </authorList>
    </citation>
    <scope>NUCLEOTIDE SEQUENCE [LARGE SCALE GENOMIC DNA]</scope>
    <source>
        <strain>PR4 / NBRC 100887</strain>
    </source>
</reference>
<keyword id="KW-1003">Cell membrane</keyword>
<keyword id="KW-0472">Membrane</keyword>
<keyword id="KW-0812">Transmembrane</keyword>
<keyword id="KW-1133">Transmembrane helix</keyword>
<feature type="chain" id="PRO_1000201748" description="UPF0060 membrane protein RER_49640">
    <location>
        <begin position="1"/>
        <end position="108"/>
    </location>
</feature>
<feature type="transmembrane region" description="Helical" evidence="1">
    <location>
        <begin position="8"/>
        <end position="28"/>
    </location>
</feature>
<feature type="transmembrane region" description="Helical" evidence="1">
    <location>
        <begin position="33"/>
        <end position="53"/>
    </location>
</feature>
<feature type="transmembrane region" description="Helical" evidence="1">
    <location>
        <begin position="62"/>
        <end position="82"/>
    </location>
</feature>
<feature type="transmembrane region" description="Helical" evidence="1">
    <location>
        <begin position="87"/>
        <end position="107"/>
    </location>
</feature>